<proteinExistence type="evidence at protein level"/>
<dbReference type="EMBL" id="AB910809">
    <property type="protein sequence ID" value="BAO65577.1"/>
    <property type="molecule type" value="mRNA"/>
</dbReference>
<dbReference type="PIR" id="A01782">
    <property type="entry name" value="NTKNAG"/>
</dbReference>
<dbReference type="PDB" id="1NOT">
    <property type="method" value="X-ray"/>
    <property type="resolution" value="1.20 A"/>
    <property type="chains" value="A=50-62"/>
</dbReference>
<dbReference type="PDB" id="1QS3">
    <property type="method" value="NMR"/>
    <property type="chains" value="A=51-61"/>
</dbReference>
<dbReference type="PDB" id="1XGA">
    <property type="method" value="NMR"/>
    <property type="chains" value="A=50-62"/>
</dbReference>
<dbReference type="PDB" id="1XGB">
    <property type="method" value="NMR"/>
    <property type="chains" value="A=50-62"/>
</dbReference>
<dbReference type="PDB" id="1XGC">
    <property type="method" value="NMR"/>
    <property type="chains" value="A=50-62"/>
</dbReference>
<dbReference type="PDB" id="2FR9">
    <property type="method" value="NMR"/>
    <property type="chains" value="A=50-60"/>
</dbReference>
<dbReference type="PDB" id="2FRB">
    <property type="method" value="NMR"/>
    <property type="chains" value="A=50-62"/>
</dbReference>
<dbReference type="PDBsum" id="1NOT"/>
<dbReference type="PDBsum" id="1QS3"/>
<dbReference type="PDBsum" id="1XGA"/>
<dbReference type="PDBsum" id="1XGB"/>
<dbReference type="PDBsum" id="1XGC"/>
<dbReference type="PDBsum" id="2FR9"/>
<dbReference type="PDBsum" id="2FRB"/>
<dbReference type="GO" id="GO:0005576">
    <property type="term" value="C:extracellular region"/>
    <property type="evidence" value="ECO:0007669"/>
    <property type="project" value="UniProtKB-SubCell"/>
</dbReference>
<dbReference type="GO" id="GO:0035792">
    <property type="term" value="C:host cell postsynaptic membrane"/>
    <property type="evidence" value="ECO:0007669"/>
    <property type="project" value="UniProtKB-KW"/>
</dbReference>
<dbReference type="GO" id="GO:0030550">
    <property type="term" value="F:acetylcholine receptor inhibitor activity"/>
    <property type="evidence" value="ECO:0007669"/>
    <property type="project" value="UniProtKB-KW"/>
</dbReference>
<dbReference type="GO" id="GO:0099106">
    <property type="term" value="F:ion channel regulator activity"/>
    <property type="evidence" value="ECO:0007669"/>
    <property type="project" value="UniProtKB-KW"/>
</dbReference>
<dbReference type="GO" id="GO:0090729">
    <property type="term" value="F:toxin activity"/>
    <property type="evidence" value="ECO:0007669"/>
    <property type="project" value="UniProtKB-KW"/>
</dbReference>
<dbReference type="InterPro" id="IPR009958">
    <property type="entry name" value="Conotoxin_a-typ"/>
</dbReference>
<dbReference type="InterPro" id="IPR018072">
    <property type="entry name" value="Conotoxin_a-typ_CS"/>
</dbReference>
<dbReference type="Pfam" id="PF07365">
    <property type="entry name" value="Toxin_8"/>
    <property type="match status" value="1"/>
</dbReference>
<dbReference type="PROSITE" id="PS60014">
    <property type="entry name" value="ALPHA_CONOTOXIN"/>
    <property type="match status" value="1"/>
</dbReference>
<evidence type="ECO:0000255" key="1"/>
<evidence type="ECO:0000269" key="2">
    <source>
    </source>
</evidence>
<evidence type="ECO:0000269" key="3">
    <source>
    </source>
</evidence>
<evidence type="ECO:0000269" key="4">
    <source>
    </source>
</evidence>
<evidence type="ECO:0000269" key="5">
    <source>
    </source>
</evidence>
<evidence type="ECO:0000269" key="6">
    <source>
    </source>
</evidence>
<evidence type="ECO:0000269" key="7">
    <source>
    </source>
</evidence>
<evidence type="ECO:0000269" key="8">
    <source>
    </source>
</evidence>
<evidence type="ECO:0000269" key="9">
    <source>
    </source>
</evidence>
<evidence type="ECO:0000269" key="10">
    <source>
    </source>
</evidence>
<evidence type="ECO:0000269" key="11">
    <source>
    </source>
</evidence>
<evidence type="ECO:0000269" key="12">
    <source>
    </source>
</evidence>
<evidence type="ECO:0000269" key="13">
    <source>
    </source>
</evidence>
<evidence type="ECO:0000269" key="14">
    <source>
    </source>
</evidence>
<evidence type="ECO:0000269" key="15">
    <source>
    </source>
</evidence>
<evidence type="ECO:0000269" key="16">
    <source>
    </source>
</evidence>
<evidence type="ECO:0000303" key="17">
    <source>
    </source>
</evidence>
<evidence type="ECO:0000305" key="18"/>
<evidence type="ECO:0000305" key="19">
    <source>
    </source>
</evidence>
<evidence type="ECO:0000305" key="20">
    <source>
    </source>
</evidence>
<evidence type="ECO:0000312" key="21">
    <source>
        <dbReference type="EMBL" id="BAO65577.1"/>
    </source>
</evidence>
<evidence type="ECO:0007829" key="22">
    <source>
        <dbReference type="PDB" id="1NOT"/>
    </source>
</evidence>
<accession>X5I9Y2</accession>
<accession>P01519</accession>
<name>CA1_CONGE</name>
<protein>
    <recommendedName>
        <fullName evidence="17">Alpha-conotoxin GI</fullName>
    </recommendedName>
    <alternativeName>
        <fullName>G1</fullName>
    </alternativeName>
</protein>
<sequence length="64" mass="7094">MGMRMMFTVFLLVVLATTVVSFPSERASDGRDDTAKDEGSDMDKLVEKKECCNPACGRHYSCGR</sequence>
<feature type="signal peptide" evidence="1">
    <location>
        <begin position="1"/>
        <end position="21"/>
    </location>
</feature>
<feature type="propeptide" id="PRO_0000454094" evidence="20">
    <location>
        <begin position="22"/>
        <end position="49"/>
    </location>
</feature>
<feature type="peptide" id="PRO_0000034874" description="Alpha-conotoxin GI" evidence="10">
    <location>
        <begin position="50"/>
        <end position="62"/>
    </location>
</feature>
<feature type="site" description="Key residue that binds to three hydrophobic amino acids of the delta subunit of muscle-type acetylcholine receptor" evidence="19">
    <location>
        <position position="60"/>
    </location>
</feature>
<feature type="modified residue" description="Cysteine amide" evidence="10">
    <location>
        <position position="62"/>
    </location>
</feature>
<feature type="disulfide bond" evidence="2 3 4 5 9 11 13 15 16">
    <location>
        <begin position="51"/>
        <end position="56"/>
    </location>
</feature>
<feature type="disulfide bond" evidence="2 3 4 5 9 11 13 15 16">
    <location>
        <begin position="52"/>
        <end position="62"/>
    </location>
</feature>
<feature type="mutagenesis site" description="3-fold increase in inhibitory potency towards mouse muscle-type acetylcholine receptor. No increase in inhibitory potency towards alpha-3-beta-2/CHRNA3-CHRNB2, alpha-3-beta-4/CHRNA3-CHRNB4, alpha-4-beta-4/CHRNA4-CHRNB4, alpha-7/CHRNA7, and alpha-9-alpha-10/CHRNA9-CHRNA10 nAChRs." evidence="6">
    <original>E</original>
    <variation>A</variation>
    <location>
        <position position="50"/>
    </location>
</feature>
<feature type="mutagenesis site" description="No significant change in inhibitory potency towards mouse muscle-type acetylcholine receptor." evidence="6">
    <original>N</original>
    <variation>A</variation>
    <location>
        <position position="53"/>
    </location>
</feature>
<feature type="mutagenesis site" description="10-fold decrease in inhibitory potency towards mouse muscle-type acetylcholine receptor. 2-fold increase in inhibitory potency towards rat alpha-9-alpha-10/CHRNA9-CHRNA10 nAChRs. No increase in inhibitory potency towards alpha-3-beta-2/CHRNA3-CHRNB2, alpha-3-beta-4/CHRNA3-CHRNB4, alpha-4-beta-4/CHRNA4-CHRNB4, and alpha-7/CHRNA7 nAChRs." evidence="6">
    <original>P</original>
    <variation>A</variation>
    <location>
        <position position="54"/>
    </location>
</feature>
<feature type="mutagenesis site" description="30-fold decrease in inhibitory potency towards mouse muscle-type acetylcholine receptor. 2-fold increase in inhibitory potency towards rat alpha-9-alpha-10/CHRNA9-CHRNA10 nAChRs. No increase in inhibitory potency towards alpha-3-beta-2/CHRNA3-CHRNB2, alpha-3-beta-4/CHRNA3-CHRNB4, alpha-4-beta-4/CHRNA4-CHRNB4, and alpha-7/CHRNA7 nAChRs." evidence="6">
    <original>G</original>
    <variation>A</variation>
    <location>
        <position position="57"/>
    </location>
</feature>
<feature type="mutagenesis site" description="8.5-fold decrease in inhibitory potency towards mouse muscle-type acetylcholine receptor. No increase in inhibitory potency towards alpha-3-beta-2/CHRNA3-CHRNB2, alpha-3-beta-4/CHRNA3-CHRNB4, alpha-4-beta-4/CHRNA4-CHRNB4, alpha-7/CHRNA7, and alpha-9-alpha-10/CHRNA9-CHRNA10 nAChRs. Decrease in affinity for both alpha/delta and alpha/gamma sites on BC3H-50 receptors and loss of affinity for both alpha/delta and alpha/gamma sites on Torpedo receptors." evidence="6 14">
    <original>R</original>
    <variation>A</variation>
    <location>
        <position position="58"/>
    </location>
</feature>
<feature type="mutagenesis site" description="No significant change in inhibitory potency towards mouse muscle-type acetylcholine receptor." evidence="6">
    <original>H</original>
    <variation>A</variation>
    <location>
        <position position="59"/>
    </location>
</feature>
<feature type="mutagenesis site" description="65-fold decrease in inhibitory potency towards mouse muscle-type acetylcholine receptor. No increase in inhibitory potency towards alpha-3-beta-2/CHRNA3-CHRNB2, alpha-3-beta-4/CHRNA3-CHRNB4, alpha-4-beta-4/CHRNA4-CHRNB4, alpha-7/CHRNA7, and alpha-9-alpha-10/CHRNA9-CHRNA10 nAChRs." evidence="6">
    <original>Y</original>
    <variation>A</variation>
    <location>
        <position position="60"/>
    </location>
</feature>
<feature type="mutagenesis site" description="No significant change in inhibitory potency towards mouse muscle-type acetylcholine receptor." evidence="6">
    <original>S</original>
    <variation>A</variation>
    <location>
        <position position="61"/>
    </location>
</feature>
<feature type="helix" evidence="22">
    <location>
        <begin position="54"/>
        <end position="59"/>
    </location>
</feature>
<reference evidence="21" key="1">
    <citation type="journal article" date="2014" name="Nat. Commun.">
        <title>Evolution of separate predation- and defence-evoked venoms in carnivorous cone snails.</title>
        <authorList>
            <person name="Dutertre S."/>
            <person name="Jin A.-H."/>
            <person name="Vetter I."/>
            <person name="Hamilton B."/>
            <person name="Sunagar K."/>
            <person name="Lavergne V."/>
            <person name="Dutertre V."/>
            <person name="Fry B.G."/>
            <person name="Antunes A."/>
            <person name="Venter D.J."/>
            <person name="Alewood P.F."/>
            <person name="Lewis R.J."/>
        </authorList>
    </citation>
    <scope>NUCLEOTIDE SEQUENCE [MRNA]</scope>
    <source>
        <tissue>Venom duct</tissue>
    </source>
</reference>
<reference key="2">
    <citation type="journal article" date="1981" name="J. Biol. Chem.">
        <title>Peptide toxins from Conus geographus venom.</title>
        <authorList>
            <person name="Gray W.R."/>
            <person name="Luque A."/>
            <person name="Olivera B.M."/>
            <person name="Barrett J."/>
            <person name="Cruz L.J."/>
        </authorList>
    </citation>
    <scope>PROTEIN SEQUENCE OF 50-62</scope>
    <scope>AMIDATION AT CYS-62</scope>
    <scope>SUBCELLULAR LOCATION</scope>
    <scope>PROBABLE AMIDATION AT CYS-62</scope>
</reference>
<reference key="3">
    <citation type="journal article" date="1982" name="FEBS Lett.">
        <title>Primary and secondary structure of conotoxin GI, a neurotoxic tridecapeptide from a marine snail.</title>
        <authorList>
            <person name="Nishiuchi Y."/>
            <person name="Sakakibara S."/>
        </authorList>
    </citation>
    <scope>DISULFIDE BONDS</scope>
    <scope>SYNTHESIS OF 50-62</scope>
</reference>
<reference key="4">
    <citation type="journal article" date="1984" name="Biochemistry">
        <title>Conotoxin GI: disulfide bridges, synthesis, and preparation of iodinated derivatives.</title>
        <authorList>
            <person name="Gray W.R."/>
            <person name="Luque F.A."/>
            <person name="Galyean R."/>
            <person name="Atherton E."/>
            <person name="Sheppard R.C."/>
            <person name="Stone B.L."/>
            <person name="Reyes A."/>
            <person name="Alford J."/>
            <person name="McIntosh M."/>
            <person name="Olivera B.M."/>
            <person name="Cruz L.J."/>
            <person name="Rivier J."/>
        </authorList>
    </citation>
    <scope>DISULFIDE BONDS</scope>
    <scope>SYNTHESIS OF 50-62</scope>
</reference>
<reference key="5">
    <citation type="journal article" date="1994" name="Biochemistry">
        <title>The alpha-conotoxins GI and MI distinguish between the nicotinic acetylcholine receptor agonist sites while SI does not.</title>
        <authorList>
            <person name="Hann R.M."/>
            <person name="Pagan O.R."/>
            <person name="Eterovic V.A."/>
        </authorList>
    </citation>
    <scope>COMPARISON WITH ALPHA-CONOTOXIN SI AND ALPHA-CONOTOXIN MI</scope>
</reference>
<reference key="6">
    <citation type="journal article" date="1995" name="Mol. Pharmacol.">
        <title>Alpha-conotoxins selectively inhibit one of the two acetylcholine binding sites of nicotinic receptors.</title>
        <authorList>
            <person name="Groebe D.R."/>
            <person name="Dumm J.M."/>
            <person name="Levitan E.S."/>
            <person name="Abramson S.N."/>
        </authorList>
    </citation>
    <scope>PHARMACOLOGICAL CHARACTERIZATION ON MOUSE MUSCLE-DERIVED BC3H-1 CELLS AND TORPEDO ELECTRIC ORGAN</scope>
</reference>
<reference key="7">
    <citation type="journal article" date="1997" name="Biochemistry">
        <title>Determinants involved in the affinity of alpha-conotoxins GI and SI for the muscle subtype of nicotinic acetylcholine receptors.</title>
        <authorList>
            <person name="Groebe D.R."/>
            <person name="Gray W.R."/>
            <person name="Abramson S.N."/>
        </authorList>
    </citation>
    <scope>MUTAGENESIS OF ARG-58</scope>
</reference>
<reference key="8">
    <citation type="journal article" date="2008" name="Biochemistry">
        <title>Role of hydroxyprolines in the in vitro oxidative folding and biological activity of conotoxins.</title>
        <authorList>
            <person name="Lopez-Vera E."/>
            <person name="Walewska A."/>
            <person name="Skalicky J.J."/>
            <person name="Olivera B.M."/>
            <person name="Bulaj G."/>
        </authorList>
    </citation>
    <scope>SYNTHESIS OF 50-62</scope>
    <scope>ROLE OF HYDROXYLATION</scope>
</reference>
<reference key="9">
    <citation type="journal article" date="2012" name="J. Biol. Chem.">
        <title>Modulation of conotoxin structure and function is achieved through a multienzyme complex in the venom glands of cone snails.</title>
        <authorList>
            <person name="Safavi-Hemami H."/>
            <person name="Gorasia D.G."/>
            <person name="Steiner A.M."/>
            <person name="Williamson N.A."/>
            <person name="Karas J.A."/>
            <person name="Gajewiak J."/>
            <person name="Olivera B.M."/>
            <person name="Bulaj G."/>
            <person name="Purcell A.W."/>
        </authorList>
    </citation>
    <scope>DISULFIDE BONDS</scope>
    <scope>FOLDING</scope>
    <source>
        <tissue>Venom</tissue>
    </source>
</reference>
<reference key="10">
    <citation type="journal article" date="2018" name="Mar. Drugs">
        <title>Alanine-scanning mutagenesis of alpha-conotoxin GI reveals the residues crucial for activity at the muscle acetylcholine receptor.</title>
        <authorList>
            <person name="Ning J."/>
            <person name="Li R."/>
            <person name="Ren J."/>
            <person name="Zhangsun D."/>
            <person name="Zhu X."/>
            <person name="Wu Y."/>
            <person name="Luo S."/>
        </authorList>
    </citation>
    <scope>FUNCTION</scope>
    <scope>MUTAGENESIS OF GLU-50; ASN-53; PRO-54; GLY-57; ARG-58; HIS-59; TYR-60 AND SER-61</scope>
</reference>
<reference key="11">
    <citation type="journal article" date="2021" name="Biochem. Pharmacol.">
        <title>Globular and ribbon isomers of Conus geographus alpha-conotoxins antagonize human nicotinic acetylcholine receptors.</title>
        <authorList>
            <person name="Tae H.S."/>
            <person name="Gao B."/>
            <person name="Jin A.H."/>
            <person name="Alewood P.F."/>
            <person name="Adams D.J."/>
        </authorList>
    </citation>
    <scope>SYNTHESIS OF 50-62 AS GLOBULAR AND RIBBON ISOMER</scope>
    <scope>FUNCTION</scope>
</reference>
<reference key="12">
    <citation type="journal article" date="2022" name="ACS Chem. Neurosci.">
        <title>Cysteine-rich alpha-conotoxin SII displays novel interactions at the muscle nicotinic acetylcholine receptor.</title>
        <authorList>
            <person name="Wilhelm P."/>
            <person name="Luna-Ramirez K."/>
            <person name="Chin Y.K."/>
            <person name="Dekan Z."/>
            <person name="Abraham N."/>
            <person name="Tae H.S."/>
            <person name="Chow C.Y."/>
            <person name="Eagles D.A."/>
            <person name="King G.F."/>
            <person name="Lewis R.J."/>
            <person name="Adams D.J."/>
            <person name="Alewood P.F."/>
        </authorList>
    </citation>
    <scope>FUNCTION</scope>
</reference>
<reference key="13">
    <citation type="journal article" date="1996" name="Biochemistry">
        <title>Three-dimensional structure of the alpha-conotoxin GI at 1.2-A resolution.</title>
        <authorList>
            <person name="Guddat L.W."/>
            <person name="Martin J.A."/>
            <person name="Shan L."/>
            <person name="Edmundson A.B."/>
            <person name="Gray W.R."/>
        </authorList>
    </citation>
    <scope>X-RAY CRYSTALLOGRAPHY (1.2 ANGSTROMS) OF 50-62</scope>
    <scope>DISULFIDE BONDS</scope>
</reference>
<reference key="14">
    <citation type="journal article" date="1989" name="Biochemistry">
        <title>Solution conformation of conotoxin GI determined by 1H nuclear magnetic resonance spectroscopy and distance geometry calculations.</title>
        <authorList>
            <person name="Kobayashi Y."/>
            <person name="Ohkubo T."/>
            <person name="Kyogoku Y."/>
            <person name="Nishiuchi Y."/>
            <person name="Sakakibara S."/>
            <person name="Braun W."/>
            <person name="Go N."/>
        </authorList>
    </citation>
    <scope>STRUCTURE BY NMR OF 50-62</scope>
    <scope>DISULFIDE BONDS</scope>
</reference>
<reference key="15">
    <citation type="journal article" date="1989" name="Biochemistry">
        <title>Solution structures of alpha-conotoxin G1 determined by two-dimensional NMR spectroscopy.</title>
        <authorList>
            <person name="Pardi A."/>
            <person name="Galdes A."/>
            <person name="Florance J."/>
            <person name="Maniconte D."/>
        </authorList>
    </citation>
    <scope>STRUCTURE BY NMR OF 50-62</scope>
    <scope>DISULFIDE BONDS</scope>
</reference>
<reference key="16">
    <citation type="journal article" date="1998" name="Eur. J. Biochem.">
        <title>Two distinct structures of alpha-conotoxin GI in aqueous solution.</title>
        <authorList>
            <person name="Maslennikov I.V."/>
            <person name="Sobol A.G."/>
            <person name="Gladky K.V."/>
            <person name="Lugovskoy A.A."/>
            <person name="Ostrovsky A.G."/>
            <person name="Tsetlin V.I."/>
            <person name="Ivanov V.T."/>
            <person name="Arseniev A.S."/>
        </authorList>
    </citation>
    <scope>STRUCTURE BY NMR OF 50-62</scope>
    <scope>DISULFIDE BONDS</scope>
</reference>
<reference key="17">
    <citation type="journal article" date="1998" name="J. Mol. Biol.">
        <title>Structure determination of the three disulfide bond isomers of alpha-conotoxin GI: a model for the role of disulfide bonds in structural stability.</title>
        <authorList>
            <person name="Gehrmann J."/>
            <person name="Alewood P.F."/>
            <person name="Craik D.J."/>
        </authorList>
    </citation>
    <scope>STRUCTURE BY NMR OF 50-62</scope>
    <scope>DISULFIDE BONDS</scope>
</reference>
<reference key="18">
    <citation type="journal article" date="1999" name="Biochemistry">
        <title>NMR solution conformation of an antitoxic analogue of alpha-conotoxin GI: identification of a common nicotinic acetylcholine receptor alpha(1)-subunit binding surface for small ligands and alpha-conotoxins.</title>
        <authorList>
            <person name="Mok K.H."/>
            <person name="Han K.H."/>
        </authorList>
    </citation>
    <scope>STRUCTURE BY NMR OF 50-62 OF AN ANTITOXIC ANALOG</scope>
    <scope>DISULFIDE BONDS</scope>
</reference>
<comment type="function">
    <text evidence="6 7 12 14">Alpha-conotoxins act on postsynaptic membranes, they bind to the nicotinic acetylcholine receptors (nAChR) and thus inhibit them (PubMed:30551685, PubMed:34062129, PubMed:35357806, PubMed:9174364). Reversibly inhibits mammalian muscle nAChR (IC(50)=339 nM on adult subtype (alpha-1-beta-1-gamma-delta/CHRNA1-CHRNB1-CHRNG-CHRND) and IC(50)=5.86-995 nM on fetal subtype (alpha-1-beta-1-delta-epsilon/CHRNA1-CHRNB1-CHRND-CHRNE)) (PubMed:30551685, PubMed:34062129, PubMed:35357806). The higher affinity site is the alpha/delta site on mouse muscle-derived BC3H-1 receptor, and the other site (alpha/gamma site) on nicotinic receptors from Torpedo californica electric organ (PubMed:7623764).</text>
</comment>
<comment type="subcellular location">
    <subcellularLocation>
        <location evidence="10">Secreted</location>
    </subcellularLocation>
</comment>
<comment type="tissue specificity">
    <text evidence="20">Expressed by the venom duct.</text>
</comment>
<comment type="domain">
    <text evidence="18">The cysteine framework is I (CC-C-C). Alpha3/5 pattern.</text>
</comment>
<comment type="PTM">
    <text>Not hydroxylated; hydroxylation, on a synthetic hydroxylated GI, improves its folding but impairs its activity against target receptors.</text>
</comment>
<comment type="miscellaneous">
    <text evidence="6 7 8">Negative results: Shows no or weak inhibition on neuronal nAChR alpha-3-beta-2/CHRNA3-CHRNB2, alpha-3-beta-4/CHRNA3-CHRNB4, alpha-4-beta-2/CHRNA4-CHRNB2, alpha-4-beta-4/CHRNA4-CHRNB4, alpha-7/CHRNA7, alpha-9-alpha-10/CHRNA9-CHRNA10.</text>
</comment>
<comment type="miscellaneous">
    <text evidence="3">This toxin is a substrate for a cone snail multienzyme complex that regulates its folding and assembly. This complex is composed of protein-disulfide isomerase (PDI), peptidyl-prolyl cis-trans isomerase (PPI) and immunoglobulin-binding protein (BiP). PDI catalyzes the oxidation and reduction of disulfide bonds. Oxidative folding rates are further increased in the presence of PPI with the maximum effect observed in the presence of both enzymes. In contrast, BiP is only observed to assist folding in the presence of microsomes, suggesting that additional cofactors are involved. This toxin has been only observed in the globular form (disulfide pattern C1-C3 and C2-C4).</text>
</comment>
<comment type="similarity">
    <text evidence="18">Belongs to the conotoxin A superfamily.</text>
</comment>
<organism>
    <name type="scientific">Conus geographus</name>
    <name type="common">Geography cone</name>
    <name type="synonym">Nubecula geographus</name>
    <dbReference type="NCBI Taxonomy" id="6491"/>
    <lineage>
        <taxon>Eukaryota</taxon>
        <taxon>Metazoa</taxon>
        <taxon>Spiralia</taxon>
        <taxon>Lophotrochozoa</taxon>
        <taxon>Mollusca</taxon>
        <taxon>Gastropoda</taxon>
        <taxon>Caenogastropoda</taxon>
        <taxon>Neogastropoda</taxon>
        <taxon>Conoidea</taxon>
        <taxon>Conidae</taxon>
        <taxon>Conus</taxon>
        <taxon>Gastridium</taxon>
    </lineage>
</organism>
<keyword id="KW-0002">3D-structure</keyword>
<keyword id="KW-0008">Acetylcholine receptor inhibiting toxin</keyword>
<keyword id="KW-0027">Amidation</keyword>
<keyword id="KW-0165">Cleavage on pair of basic residues</keyword>
<keyword id="KW-0903">Direct protein sequencing</keyword>
<keyword id="KW-1015">Disulfide bond</keyword>
<keyword id="KW-0872">Ion channel impairing toxin</keyword>
<keyword id="KW-0528">Neurotoxin</keyword>
<keyword id="KW-0629">Postsynaptic neurotoxin</keyword>
<keyword id="KW-0964">Secreted</keyword>
<keyword id="KW-0732">Signal</keyword>
<keyword id="KW-0800">Toxin</keyword>